<dbReference type="EMBL" id="D17510">
    <property type="protein sequence ID" value="BAA04338.1"/>
    <property type="molecule type" value="Genomic_DNA"/>
</dbReference>
<dbReference type="PIR" id="T07460">
    <property type="entry name" value="T07460"/>
</dbReference>
<dbReference type="RefSeq" id="NP_042381.1">
    <property type="nucleotide sequence ID" value="NC_001631.1"/>
</dbReference>
<dbReference type="SMR" id="P52762"/>
<dbReference type="GeneID" id="809039"/>
<dbReference type="GO" id="GO:0009507">
    <property type="term" value="C:chloroplast"/>
    <property type="evidence" value="ECO:0007669"/>
    <property type="project" value="UniProtKB-SubCell"/>
</dbReference>
<dbReference type="GO" id="GO:0015935">
    <property type="term" value="C:small ribosomal subunit"/>
    <property type="evidence" value="ECO:0007669"/>
    <property type="project" value="InterPro"/>
</dbReference>
<dbReference type="GO" id="GO:0019843">
    <property type="term" value="F:rRNA binding"/>
    <property type="evidence" value="ECO:0007669"/>
    <property type="project" value="UniProtKB-UniRule"/>
</dbReference>
<dbReference type="GO" id="GO:0003735">
    <property type="term" value="F:structural constituent of ribosome"/>
    <property type="evidence" value="ECO:0007669"/>
    <property type="project" value="InterPro"/>
</dbReference>
<dbReference type="GO" id="GO:0006412">
    <property type="term" value="P:translation"/>
    <property type="evidence" value="ECO:0007669"/>
    <property type="project" value="UniProtKB-UniRule"/>
</dbReference>
<dbReference type="CDD" id="cd03368">
    <property type="entry name" value="Ribosomal_S12"/>
    <property type="match status" value="1"/>
</dbReference>
<dbReference type="FunFam" id="2.40.50.140:FF:000008">
    <property type="entry name" value="30S ribosomal protein S12, chloroplastic"/>
    <property type="match status" value="1"/>
</dbReference>
<dbReference type="Gene3D" id="2.40.50.140">
    <property type="entry name" value="Nucleic acid-binding proteins"/>
    <property type="match status" value="1"/>
</dbReference>
<dbReference type="HAMAP" id="MF_00403_B">
    <property type="entry name" value="Ribosomal_uS12_B"/>
    <property type="match status" value="1"/>
</dbReference>
<dbReference type="InterPro" id="IPR012340">
    <property type="entry name" value="NA-bd_OB-fold"/>
</dbReference>
<dbReference type="InterPro" id="IPR006032">
    <property type="entry name" value="Ribosomal_uS12"/>
</dbReference>
<dbReference type="InterPro" id="IPR005679">
    <property type="entry name" value="Ribosomal_uS12_bac"/>
</dbReference>
<dbReference type="NCBIfam" id="TIGR00981">
    <property type="entry name" value="rpsL_bact"/>
    <property type="match status" value="1"/>
</dbReference>
<dbReference type="PANTHER" id="PTHR11652">
    <property type="entry name" value="30S RIBOSOMAL PROTEIN S12 FAMILY MEMBER"/>
    <property type="match status" value="1"/>
</dbReference>
<dbReference type="Pfam" id="PF00164">
    <property type="entry name" value="Ribosom_S12_S23"/>
    <property type="match status" value="1"/>
</dbReference>
<dbReference type="PIRSF" id="PIRSF002133">
    <property type="entry name" value="Ribosomal_S12/S23"/>
    <property type="match status" value="1"/>
</dbReference>
<dbReference type="PRINTS" id="PR01034">
    <property type="entry name" value="RIBOSOMALS12"/>
</dbReference>
<dbReference type="SUPFAM" id="SSF50249">
    <property type="entry name" value="Nucleic acid-binding proteins"/>
    <property type="match status" value="1"/>
</dbReference>
<dbReference type="PROSITE" id="PS00055">
    <property type="entry name" value="RIBOSOMAL_S12"/>
    <property type="match status" value="1"/>
</dbReference>
<reference key="1">
    <citation type="journal article" date="1994" name="Proc. Natl. Acad. Sci. U.S.A.">
        <title>Loss of all ndh genes as determined by sequencing the entire chloroplast genome of the black pine Pinus thunbergii.</title>
        <authorList>
            <person name="Wakasugi T."/>
            <person name="Tsudzuki J."/>
            <person name="Ito S."/>
            <person name="Nakashima K."/>
            <person name="Tsudzuki T."/>
            <person name="Sugiura M."/>
        </authorList>
    </citation>
    <scope>NUCLEOTIDE SEQUENCE [LARGE SCALE GENOMIC DNA]</scope>
</reference>
<protein>
    <recommendedName>
        <fullName evidence="2">Small ribosomal subunit protein uS12c</fullName>
    </recommendedName>
    <alternativeName>
        <fullName>30S ribosomal protein S12, chloroplastic</fullName>
    </alternativeName>
</protein>
<sequence>MPTIQQLIRNARQPIENRKKSPALRGCPQRRGVCARVYTITPKKPNSALRKVARVRLTSGFEITAYIPGIDHNLQEHSVVLVRGGRVKDLPGVRYHIVRGTLDAAEVKDRQQGRSKYGVKKQK</sequence>
<evidence type="ECO:0000250" key="1"/>
<evidence type="ECO:0000305" key="2"/>
<proteinExistence type="inferred from homology"/>
<name>RR12_PINTH</name>
<gene>
    <name type="primary">rps12</name>
</gene>
<accession>P52762</accession>
<feature type="chain" id="PRO_0000146420" description="Small ribosomal subunit protein uS12c">
    <location>
        <begin position="1"/>
        <end position="123"/>
    </location>
</feature>
<organism>
    <name type="scientific">Pinus thunbergii</name>
    <name type="common">Japanese black pine</name>
    <name type="synonym">Pinus thunbergiana</name>
    <dbReference type="NCBI Taxonomy" id="3350"/>
    <lineage>
        <taxon>Eukaryota</taxon>
        <taxon>Viridiplantae</taxon>
        <taxon>Streptophyta</taxon>
        <taxon>Embryophyta</taxon>
        <taxon>Tracheophyta</taxon>
        <taxon>Spermatophyta</taxon>
        <taxon>Pinopsida</taxon>
        <taxon>Pinidae</taxon>
        <taxon>Conifers I</taxon>
        <taxon>Pinales</taxon>
        <taxon>Pinaceae</taxon>
        <taxon>Pinus</taxon>
        <taxon>Pinus subgen. Pinus</taxon>
    </lineage>
</organism>
<comment type="function">
    <text evidence="1">With S4 and S5 plays an important role in translational accuracy. Located at the interface of the 30S and 50S subunits (By similarity).</text>
</comment>
<comment type="subunit">
    <text evidence="1">Part of the 30S ribosomal subunit.</text>
</comment>
<comment type="subcellular location">
    <subcellularLocation>
        <location>Plastid</location>
        <location>Chloroplast</location>
    </subcellularLocation>
</comment>
<comment type="similarity">
    <text evidence="2">Belongs to the universal ribosomal protein uS12 family.</text>
</comment>
<geneLocation type="chloroplast"/>
<keyword id="KW-0150">Chloroplast</keyword>
<keyword id="KW-0934">Plastid</keyword>
<keyword id="KW-0687">Ribonucleoprotein</keyword>
<keyword id="KW-0689">Ribosomal protein</keyword>
<keyword id="KW-0694">RNA-binding</keyword>
<keyword id="KW-0699">rRNA-binding</keyword>